<sequence>MAAIKDENNDHLVQSDNPEHPSNLIPALCRNFYSHGWVTGTGGGASIKRDNHIFIAPSGVQKELIQPHDIFVLQYPTPKYPPSARQYIRKPLELKPSACTPLFLAAFDRGAGCCIHTHSQWAVLVTLLVEREKGPEGCFEISNIEQIKGIPRGKGKGMLGFFDTLKIPIIENTAFEEDLTSSLEEAMEKYPDTYAVLVRRHGIYVWGDDVAKAKTQCESLDYLFQLAVEMHKLGLPWVKS</sequence>
<accession>C6H2R1</accession>
<keyword id="KW-0028">Amino-acid biosynthesis</keyword>
<keyword id="KW-0963">Cytoplasm</keyword>
<keyword id="KW-0456">Lyase</keyword>
<keyword id="KW-0479">Metal-binding</keyword>
<keyword id="KW-0486">Methionine biosynthesis</keyword>
<keyword id="KW-1185">Reference proteome</keyword>
<keyword id="KW-0862">Zinc</keyword>
<organism>
    <name type="scientific">Ajellomyces capsulatus (strain H143)</name>
    <name type="common">Darling's disease fungus</name>
    <name type="synonym">Histoplasma capsulatum</name>
    <dbReference type="NCBI Taxonomy" id="544712"/>
    <lineage>
        <taxon>Eukaryota</taxon>
        <taxon>Fungi</taxon>
        <taxon>Dikarya</taxon>
        <taxon>Ascomycota</taxon>
        <taxon>Pezizomycotina</taxon>
        <taxon>Eurotiomycetes</taxon>
        <taxon>Eurotiomycetidae</taxon>
        <taxon>Onygenales</taxon>
        <taxon>Ajellomycetaceae</taxon>
        <taxon>Histoplasma</taxon>
    </lineage>
</organism>
<comment type="function">
    <text evidence="1">Catalyzes the dehydration of methylthioribulose-1-phosphate (MTRu-1-P) into 2,3-diketo-5-methylthiopentyl-1-phosphate (DK-MTP-1-P).</text>
</comment>
<comment type="catalytic activity">
    <reaction evidence="1">
        <text>5-(methylsulfanyl)-D-ribulose 1-phosphate = 5-methylsulfanyl-2,3-dioxopentyl phosphate + H2O</text>
        <dbReference type="Rhea" id="RHEA:15549"/>
        <dbReference type="ChEBI" id="CHEBI:15377"/>
        <dbReference type="ChEBI" id="CHEBI:58548"/>
        <dbReference type="ChEBI" id="CHEBI:58828"/>
        <dbReference type="EC" id="4.2.1.109"/>
    </reaction>
</comment>
<comment type="cofactor">
    <cofactor evidence="1">
        <name>Zn(2+)</name>
        <dbReference type="ChEBI" id="CHEBI:29105"/>
    </cofactor>
    <text evidence="1">Binds 1 zinc ion per subunit.</text>
</comment>
<comment type="pathway">
    <text evidence="1">Amino-acid biosynthesis; L-methionine biosynthesis via salvage pathway; L-methionine from S-methyl-5-thio-alpha-D-ribose 1-phosphate: step 2/6.</text>
</comment>
<comment type="subcellular location">
    <subcellularLocation>
        <location evidence="1">Cytoplasm</location>
    </subcellularLocation>
</comment>
<comment type="similarity">
    <text evidence="1">Belongs to the aldolase class II family. MtnB subfamily.</text>
</comment>
<protein>
    <recommendedName>
        <fullName evidence="1">Methylthioribulose-1-phosphate dehydratase</fullName>
        <shortName evidence="1">MTRu-1-P dehydratase</shortName>
        <ecNumber evidence="1">4.2.1.109</ecNumber>
    </recommendedName>
</protein>
<gene>
    <name evidence="1" type="primary">MDE1</name>
    <name type="ORF">HCDG_00993</name>
</gene>
<feature type="chain" id="PRO_0000393800" description="Methylthioribulose-1-phosphate dehydratase">
    <location>
        <begin position="1"/>
        <end position="240"/>
    </location>
</feature>
<feature type="active site" description="Proton donor/acceptor" evidence="1">
    <location>
        <position position="145"/>
    </location>
</feature>
<feature type="binding site" evidence="1">
    <location>
        <position position="99"/>
    </location>
    <ligand>
        <name>substrate</name>
    </ligand>
</feature>
<feature type="binding site" evidence="1">
    <location>
        <position position="116"/>
    </location>
    <ligand>
        <name>Zn(2+)</name>
        <dbReference type="ChEBI" id="CHEBI:29105"/>
    </ligand>
</feature>
<feature type="binding site" evidence="1">
    <location>
        <position position="118"/>
    </location>
    <ligand>
        <name>Zn(2+)</name>
        <dbReference type="ChEBI" id="CHEBI:29105"/>
    </ligand>
</feature>
<feature type="binding site" evidence="1">
    <location>
        <position position="201"/>
    </location>
    <ligand>
        <name>Zn(2+)</name>
        <dbReference type="ChEBI" id="CHEBI:29105"/>
    </ligand>
</feature>
<evidence type="ECO:0000255" key="1">
    <source>
        <dbReference type="HAMAP-Rule" id="MF_03116"/>
    </source>
</evidence>
<dbReference type="EC" id="4.2.1.109" evidence="1"/>
<dbReference type="EMBL" id="GG692419">
    <property type="protein sequence ID" value="EER45414.1"/>
    <property type="molecule type" value="Genomic_DNA"/>
</dbReference>
<dbReference type="SMR" id="C6H2R1"/>
<dbReference type="STRING" id="544712.C6H2R1"/>
<dbReference type="VEuPathDB" id="FungiDB:HCDG_00993"/>
<dbReference type="eggNOG" id="KOG2631">
    <property type="taxonomic scope" value="Eukaryota"/>
</dbReference>
<dbReference type="HOGENOM" id="CLU_006033_4_0_1"/>
<dbReference type="OMA" id="WFPGTSG"/>
<dbReference type="OrthoDB" id="68at299071"/>
<dbReference type="UniPathway" id="UPA00904">
    <property type="reaction ID" value="UER00875"/>
</dbReference>
<dbReference type="Proteomes" id="UP000002624">
    <property type="component" value="Unassembled WGS sequence"/>
</dbReference>
<dbReference type="GO" id="GO:0005737">
    <property type="term" value="C:cytoplasm"/>
    <property type="evidence" value="ECO:0007669"/>
    <property type="project" value="UniProtKB-SubCell"/>
</dbReference>
<dbReference type="GO" id="GO:0046570">
    <property type="term" value="F:methylthioribulose 1-phosphate dehydratase activity"/>
    <property type="evidence" value="ECO:0007669"/>
    <property type="project" value="UniProtKB-UniRule"/>
</dbReference>
<dbReference type="GO" id="GO:0008270">
    <property type="term" value="F:zinc ion binding"/>
    <property type="evidence" value="ECO:0007669"/>
    <property type="project" value="UniProtKB-UniRule"/>
</dbReference>
<dbReference type="GO" id="GO:0019509">
    <property type="term" value="P:L-methionine salvage from methylthioadenosine"/>
    <property type="evidence" value="ECO:0007669"/>
    <property type="project" value="UniProtKB-UniRule"/>
</dbReference>
<dbReference type="FunFam" id="3.40.225.10:FF:000003">
    <property type="entry name" value="Methylthioribulose-1-phosphate dehydratase"/>
    <property type="match status" value="1"/>
</dbReference>
<dbReference type="Gene3D" id="3.40.225.10">
    <property type="entry name" value="Class II aldolase/adducin N-terminal domain"/>
    <property type="match status" value="1"/>
</dbReference>
<dbReference type="HAMAP" id="MF_03116">
    <property type="entry name" value="Salvage_MtnB_euk"/>
    <property type="match status" value="1"/>
</dbReference>
<dbReference type="InterPro" id="IPR001303">
    <property type="entry name" value="Aldolase_II/adducin_N"/>
</dbReference>
<dbReference type="InterPro" id="IPR036409">
    <property type="entry name" value="Aldolase_II/adducin_N_sf"/>
</dbReference>
<dbReference type="InterPro" id="IPR017714">
    <property type="entry name" value="MethylthioRu-1-P_deHdtase_MtnB"/>
</dbReference>
<dbReference type="InterPro" id="IPR027514">
    <property type="entry name" value="Salvage_MtnB_euk"/>
</dbReference>
<dbReference type="NCBIfam" id="TIGR03328">
    <property type="entry name" value="salvage_mtnB"/>
    <property type="match status" value="1"/>
</dbReference>
<dbReference type="PANTHER" id="PTHR10640">
    <property type="entry name" value="METHYLTHIORIBULOSE-1-PHOSPHATE DEHYDRATASE"/>
    <property type="match status" value="1"/>
</dbReference>
<dbReference type="PANTHER" id="PTHR10640:SF7">
    <property type="entry name" value="METHYLTHIORIBULOSE-1-PHOSPHATE DEHYDRATASE"/>
    <property type="match status" value="1"/>
</dbReference>
<dbReference type="Pfam" id="PF00596">
    <property type="entry name" value="Aldolase_II"/>
    <property type="match status" value="1"/>
</dbReference>
<dbReference type="SMART" id="SM01007">
    <property type="entry name" value="Aldolase_II"/>
    <property type="match status" value="1"/>
</dbReference>
<dbReference type="SUPFAM" id="SSF53639">
    <property type="entry name" value="AraD/HMP-PK domain-like"/>
    <property type="match status" value="1"/>
</dbReference>
<proteinExistence type="inferred from homology"/>
<name>MTNB_AJECH</name>
<reference key="1">
    <citation type="submission" date="2009-05" db="EMBL/GenBank/DDBJ databases">
        <title>The genome sequence of Ajellomyces capsulatus strain H143.</title>
        <authorList>
            <person name="Champion M."/>
            <person name="Cuomo C.A."/>
            <person name="Ma L.-J."/>
            <person name="Henn M.R."/>
            <person name="Sil A."/>
            <person name="Goldman B."/>
            <person name="Young S.K."/>
            <person name="Kodira C.D."/>
            <person name="Zeng Q."/>
            <person name="Koehrsen M."/>
            <person name="Alvarado L."/>
            <person name="Berlin A.M."/>
            <person name="Borenstein D."/>
            <person name="Chen Z."/>
            <person name="Engels R."/>
            <person name="Freedman E."/>
            <person name="Gellesch M."/>
            <person name="Goldberg J."/>
            <person name="Griggs A."/>
            <person name="Gujja S."/>
            <person name="Heiman D.I."/>
            <person name="Hepburn T.A."/>
            <person name="Howarth C."/>
            <person name="Jen D."/>
            <person name="Larson L."/>
            <person name="Lewis B."/>
            <person name="Mehta T."/>
            <person name="Park D."/>
            <person name="Pearson M."/>
            <person name="Roberts A."/>
            <person name="Saif S."/>
            <person name="Shea T.D."/>
            <person name="Shenoy N."/>
            <person name="Sisk P."/>
            <person name="Stolte C."/>
            <person name="Sykes S."/>
            <person name="Walk T."/>
            <person name="White J."/>
            <person name="Yandava C."/>
            <person name="Klein B."/>
            <person name="McEwen J.G."/>
            <person name="Puccia R."/>
            <person name="Goldman G.H."/>
            <person name="Felipe M.S."/>
            <person name="Nino-Vega G."/>
            <person name="San-Blas G."/>
            <person name="Taylor J.W."/>
            <person name="Mendoza L."/>
            <person name="Galagan J.E."/>
            <person name="Nusbaum C."/>
            <person name="Birren B.W."/>
        </authorList>
    </citation>
    <scope>NUCLEOTIDE SEQUENCE [LARGE SCALE GENOMIC DNA]</scope>
    <source>
        <strain>H143</strain>
    </source>
</reference>